<gene>
    <name type="primary">AFP2</name>
</gene>
<accession>P30230</accession>
<accession>Q003I2</accession>
<feature type="signal peptide" evidence="2">
    <location>
        <begin position="1"/>
        <end position="29"/>
    </location>
</feature>
<feature type="chain" id="PRO_0000007052" description="Defensin-like protein 2">
    <location>
        <begin position="30"/>
        <end position="80"/>
    </location>
</feature>
<feature type="modified residue" description="Pyrrolidone carboxylic acid" evidence="3">
    <location>
        <position position="30"/>
    </location>
</feature>
<feature type="disulfide bond" evidence="1">
    <location>
        <begin position="33"/>
        <end position="80"/>
    </location>
</feature>
<feature type="disulfide bond" evidence="1">
    <location>
        <begin position="44"/>
        <end position="65"/>
    </location>
</feature>
<feature type="disulfide bond" evidence="1">
    <location>
        <begin position="50"/>
        <end position="74"/>
    </location>
</feature>
<feature type="disulfide bond" evidence="1">
    <location>
        <begin position="54"/>
        <end position="76"/>
    </location>
</feature>
<feature type="mutagenesis site" description="Increased antifungal potency." evidence="5">
    <original>Q</original>
    <variation>M</variation>
    <location>
        <position position="34"/>
    </location>
</feature>
<feature type="mutagenesis site" description="No effect on antifungal potency." evidence="5">
    <original>P</original>
    <variation>R</variation>
    <location>
        <position position="36"/>
    </location>
</feature>
<feature type="mutagenesis site" description="Strongly increased antifungal potency." evidence="5">
    <original>G</original>
    <variation>R</variation>
    <location>
        <position position="38"/>
    </location>
</feature>
<feature type="mutagenesis site" description="Decreased antifungal potency and increased sensitivity to inorganic cations." evidence="5">
    <original>T</original>
    <variation>G</variation>
    <location>
        <position position="39"/>
    </location>
</feature>
<feature type="mutagenesis site" description="Slightly decreased antifungal potency." evidence="5">
    <original>S</original>
    <variation>R</variation>
    <location>
        <position position="41"/>
    </location>
</feature>
<feature type="mutagenesis site" description="Increased antifungal potency." evidence="5">
    <original>G</original>
    <variation>M</variation>
    <location>
        <position position="45"/>
    </location>
</feature>
<feature type="mutagenesis site" description="Slightly decreased antifungal potency." evidence="5">
    <original>I</original>
    <variation>R</variation>
    <location>
        <position position="55"/>
    </location>
</feature>
<feature type="mutagenesis site" description="Decreased antifungal potency." evidence="5">
    <original>L</original>
    <variation>R</variation>
    <location>
        <position position="57"/>
    </location>
</feature>
<feature type="mutagenesis site" description="Decreased antifungal potency and increased sensitivity to inorganic cations." evidence="5">
    <original>A</original>
    <variation>W</variation>
    <location>
        <position position="60"/>
    </location>
</feature>
<feature type="mutagenesis site" description="No effect on antifungal potency." evidence="5">
    <original>N</original>
    <variation>R</variation>
    <location>
        <position position="66"/>
    </location>
</feature>
<feature type="mutagenesis site" description="Decreased antifungal potency." evidence="5">
    <original>Y</original>
    <variation>A</variation>
    <location>
        <position position="67"/>
    </location>
</feature>
<feature type="mutagenesis site" description="Decreased antifungal potency and increased sensitivity to inorganic cations." evidence="5">
    <original>Y</original>
    <variation>G</variation>
    <location>
        <position position="67"/>
    </location>
</feature>
<feature type="mutagenesis site" description="Strongly increased antifungal potency." evidence="5">
    <original>V</original>
    <variation>R</variation>
    <location>
        <position position="68"/>
    </location>
</feature>
<feature type="mutagenesis site" description="Decreased antifungal potency and increased sensitivity to inorganic cations." evidence="5">
    <original>F</original>
    <variation>M</variation>
    <location>
        <position position="69"/>
    </location>
</feature>
<feature type="mutagenesis site" description="Decreased antifungal potency and increased sensitivity to inorganic cations." evidence="5">
    <location>
        <position position="70"/>
    </location>
</feature>
<feature type="mutagenesis site" description="Slightly decreased antifungal potency." evidence="5">
    <original>A</original>
    <variation>R</variation>
    <location>
        <position position="71"/>
    </location>
</feature>
<feature type="mutagenesis site" description="Decreased antifungal potency and increased sensitivity to inorganic cations." evidence="5">
    <original>K</original>
    <variation>Q</variation>
    <location>
        <position position="73"/>
    </location>
</feature>
<feature type="mutagenesis site" description="Decreased antifungal potency." evidence="5">
    <original>I</original>
    <variation>R</variation>
    <location>
        <position position="75"/>
    </location>
</feature>
<feature type="mutagenesis site" description="No effect on antifungal potency." evidence="5">
    <original>Y</original>
    <variation>I</variation>
    <location>
        <position position="77"/>
    </location>
</feature>
<feature type="mutagenesis site" description="Slightly decreased antifungal potency." evidence="5">
    <original>F</original>
    <variation>R</variation>
    <location>
        <position position="78"/>
    </location>
</feature>
<feature type="strand" evidence="7">
    <location>
        <begin position="32"/>
        <end position="35"/>
    </location>
</feature>
<feature type="helix" evidence="7">
    <location>
        <begin position="47"/>
        <end position="57"/>
    </location>
</feature>
<feature type="strand" evidence="7">
    <location>
        <begin position="61"/>
        <end position="68"/>
    </location>
</feature>
<feature type="strand" evidence="7">
    <location>
        <begin position="71"/>
        <end position="79"/>
    </location>
</feature>
<protein>
    <recommendedName>
        <fullName>Defensin-like protein 2</fullName>
    </recommendedName>
    <alternativeName>
        <fullName>Cysteine-rich antifungal protein 2</fullName>
        <shortName>AFP2</shortName>
        <shortName>RAFP2</shortName>
    </alternativeName>
</protein>
<sequence>MAKFASIIVLLFVALVVFAAFEEPTMVEAQKLCQRPSGTWSGVCGNNNACKNQCIRLEKARHGSCNYVFPAHKCICYFPC</sequence>
<keyword id="KW-0002">3D-structure</keyword>
<keyword id="KW-0929">Antimicrobial</keyword>
<keyword id="KW-0903">Direct protein sequencing</keyword>
<keyword id="KW-1015">Disulfide bond</keyword>
<keyword id="KW-0295">Fungicide</keyword>
<keyword id="KW-0611">Plant defense</keyword>
<keyword id="KW-0873">Pyrrolidone carboxylic acid</keyword>
<keyword id="KW-1185">Reference proteome</keyword>
<keyword id="KW-0964">Secreted</keyword>
<keyword id="KW-0732">Signal</keyword>
<organism>
    <name type="scientific">Raphanus sativus</name>
    <name type="common">Radish</name>
    <name type="synonym">Raphanus raphanistrum var. sativus</name>
    <dbReference type="NCBI Taxonomy" id="3726"/>
    <lineage>
        <taxon>Eukaryota</taxon>
        <taxon>Viridiplantae</taxon>
        <taxon>Streptophyta</taxon>
        <taxon>Embryophyta</taxon>
        <taxon>Tracheophyta</taxon>
        <taxon>Spermatophyta</taxon>
        <taxon>Magnoliopsida</taxon>
        <taxon>eudicotyledons</taxon>
        <taxon>Gunneridae</taxon>
        <taxon>Pentapetalae</taxon>
        <taxon>rosids</taxon>
        <taxon>malvids</taxon>
        <taxon>Brassicales</taxon>
        <taxon>Brassicaceae</taxon>
        <taxon>Brassiceae</taxon>
        <taxon>Raphanus</taxon>
    </lineage>
</organism>
<proteinExistence type="evidence at protein level"/>
<name>DEF2_RAPSA</name>
<comment type="function">
    <text evidence="4">Possesses antifungal activity sensitive to inorganic cations. Induces potential changes in fungal membranes and increased K(+) efflux and Ca(2+) uptake.</text>
</comment>
<comment type="subcellular location">
    <subcellularLocation>
        <location>Secreted</location>
    </subcellularLocation>
</comment>
<comment type="similarity">
    <text evidence="6">Belongs to the DEFL family.</text>
</comment>
<dbReference type="EMBL" id="U18556">
    <property type="protein sequence ID" value="AAA69540.1"/>
    <property type="molecule type" value="mRNA"/>
</dbReference>
<dbReference type="EMBL" id="DQ979838">
    <property type="protein sequence ID" value="ABJ09664.1"/>
    <property type="molecule type" value="Genomic_DNA"/>
</dbReference>
<dbReference type="PIR" id="T10823">
    <property type="entry name" value="T10823"/>
</dbReference>
<dbReference type="PDB" id="2N2R">
    <property type="method" value="NMR"/>
    <property type="chains" value="A=30-80"/>
</dbReference>
<dbReference type="PDBsum" id="2N2R"/>
<dbReference type="SMR" id="P30230"/>
<dbReference type="EvolutionaryTrace" id="P30230"/>
<dbReference type="Proteomes" id="UP000504610">
    <property type="component" value="Unplaced"/>
</dbReference>
<dbReference type="GO" id="GO:0005576">
    <property type="term" value="C:extracellular region"/>
    <property type="evidence" value="ECO:0007669"/>
    <property type="project" value="UniProtKB-SubCell"/>
</dbReference>
<dbReference type="GO" id="GO:0050832">
    <property type="term" value="P:defense response to fungus"/>
    <property type="evidence" value="ECO:0007669"/>
    <property type="project" value="UniProtKB-KW"/>
</dbReference>
<dbReference type="GO" id="GO:0031640">
    <property type="term" value="P:killing of cells of another organism"/>
    <property type="evidence" value="ECO:0007669"/>
    <property type="project" value="UniProtKB-KW"/>
</dbReference>
<dbReference type="CDD" id="cd00107">
    <property type="entry name" value="Knot1"/>
    <property type="match status" value="1"/>
</dbReference>
<dbReference type="FunFam" id="3.30.30.10:FF:000003">
    <property type="entry name" value="Defensin-like protein 1"/>
    <property type="match status" value="1"/>
</dbReference>
<dbReference type="Gene3D" id="3.30.30.10">
    <property type="entry name" value="Knottin, scorpion toxin-like"/>
    <property type="match status" value="1"/>
</dbReference>
<dbReference type="InterPro" id="IPR008176">
    <property type="entry name" value="Defensin_plant"/>
</dbReference>
<dbReference type="InterPro" id="IPR003614">
    <property type="entry name" value="Scorpion_toxin-like"/>
</dbReference>
<dbReference type="InterPro" id="IPR036574">
    <property type="entry name" value="Scorpion_toxin-like_sf"/>
</dbReference>
<dbReference type="PANTHER" id="PTHR33147">
    <property type="entry name" value="DEFENSIN-LIKE PROTEIN 1"/>
    <property type="match status" value="1"/>
</dbReference>
<dbReference type="PANTHER" id="PTHR33147:SF101">
    <property type="entry name" value="DEFENSIN-LIKE PROTEIN 13"/>
    <property type="match status" value="1"/>
</dbReference>
<dbReference type="Pfam" id="PF00304">
    <property type="entry name" value="Gamma-thionin"/>
    <property type="match status" value="1"/>
</dbReference>
<dbReference type="SMART" id="SM00505">
    <property type="entry name" value="Knot1"/>
    <property type="match status" value="1"/>
</dbReference>
<dbReference type="SUPFAM" id="SSF57095">
    <property type="entry name" value="Scorpion toxin-like"/>
    <property type="match status" value="1"/>
</dbReference>
<dbReference type="PROSITE" id="PS00940">
    <property type="entry name" value="GAMMA_THIONIN"/>
    <property type="match status" value="1"/>
</dbReference>
<evidence type="ECO:0000250" key="1"/>
<evidence type="ECO:0000269" key="2">
    <source>
    </source>
</evidence>
<evidence type="ECO:0000269" key="3">
    <source>
    </source>
</evidence>
<evidence type="ECO:0000269" key="4">
    <source>
    </source>
</evidence>
<evidence type="ECO:0000269" key="5">
    <source>
    </source>
</evidence>
<evidence type="ECO:0000305" key="6"/>
<evidence type="ECO:0007829" key="7">
    <source>
        <dbReference type="PDB" id="2N2R"/>
    </source>
</evidence>
<reference key="1">
    <citation type="journal article" date="1995" name="Plant Cell">
        <title>Small cysteine-rich antifungal proteins from radish: their role in host defense.</title>
        <authorList>
            <person name="Terras F.R.G."/>
            <person name="Eggermont K."/>
            <person name="Kovaleva V."/>
            <person name="Raikhel N.V."/>
            <person name="Osborn R.W."/>
            <person name="Kester A."/>
            <person name="Rees S.B."/>
            <person name="Torrekens S."/>
            <person name="van Leuven F."/>
            <person name="Vanderleyden J."/>
            <person name="Cammue B.P.A."/>
            <person name="Broekaert W.F."/>
        </authorList>
    </citation>
    <scope>NUCLEOTIDE SEQUENCE [MRNA]</scope>
    <source>
        <strain>cv. Ronde Rode Kleine Witpunt</strain>
        <tissue>Seed</tissue>
    </source>
</reference>
<reference key="2">
    <citation type="submission" date="2006-09" db="EMBL/GenBank/DDBJ databases">
        <title>Cloning and expression of rafp2 antifungal gene.</title>
        <authorList>
            <person name="Kulkarni A.V."/>
            <person name="Krishnaraj P.U."/>
            <person name="Kuruvinashetti M.S."/>
        </authorList>
    </citation>
    <scope>NUCLEOTIDE SEQUENCE [GENOMIC DNA]</scope>
</reference>
<reference key="3">
    <citation type="journal article" date="1992" name="J. Biol. Chem.">
        <title>Analysis of two novel classes of plant antifungal proteins from radish (Raphanus sativus L.) seeds.</title>
        <authorList>
            <person name="Terras F.R.G."/>
            <person name="Schoofs H.M.E."/>
            <person name="de Bolle M.F.C."/>
            <person name="van Leuven F."/>
            <person name="Rees S.B."/>
            <person name="Vanderleyden J."/>
            <person name="Cammue B.P.A."/>
            <person name="Broekaert W.F."/>
        </authorList>
    </citation>
    <scope>PROTEIN SEQUENCE OF 30-65</scope>
    <source>
        <tissue>Seed</tissue>
    </source>
</reference>
<reference key="4">
    <citation type="journal article" date="1993" name="FEBS Lett.">
        <title>A new family of basic cysteine-rich plant antifungal proteins from Brassicaceae species.</title>
        <authorList>
            <person name="Terras F.R.G."/>
            <person name="Torrekens S."/>
            <person name="van Leuven F."/>
            <person name="Osborn R.W."/>
            <person name="Vanderleyden J."/>
            <person name="Cammue B.P.A."/>
            <person name="Broekaert W.F."/>
        </authorList>
    </citation>
    <scope>PROTEIN SEQUENCE OF 30-58</scope>
    <scope>PYROGLUTAMATE FORMATION AT GLN-30</scope>
</reference>
<reference key="5">
    <citation type="journal article" date="1996" name="J. Biol. Chem.">
        <title>Fungal membrane responses induced by plant defensins and thionins.</title>
        <authorList>
            <person name="Thevissen K."/>
            <person name="Ghazi A."/>
            <person name="De Samblanx G.W."/>
            <person name="Brownlee C."/>
            <person name="Osborn R.W."/>
            <person name="Broekaert W.F."/>
        </authorList>
    </citation>
    <scope>FUNCTION</scope>
</reference>
<reference key="6">
    <citation type="journal article" date="1997" name="J. Biol. Chem.">
        <title>Mutational analysis of a plant defensin from radish (Raphanus sativus L.) reveals two adjacent sites important for antifungal activity.</title>
        <authorList>
            <person name="De Samblanx G.W."/>
            <person name="Goderis I.J."/>
            <person name="Thevissen K."/>
            <person name="Raemaekers R."/>
            <person name="Fant F."/>
            <person name="Borremans F."/>
            <person name="Acland D.P."/>
            <person name="Osborn R.W."/>
            <person name="Patel S."/>
            <person name="Broekaert W.F."/>
        </authorList>
    </citation>
    <scope>MUTAGENESIS OF GLN-34; PRO-36; GLY-38; THR-39; SER-41; GLY-45; ILE-55; LEU-57; ALA-60; ASN-66; TYR-67; VAL-68; PHE-69; PRO-70; ALA-71; LYS-73; ILE-75; TYR-77 AND PHE-78</scope>
</reference>